<proteinExistence type="evidence at transcript level"/>
<accession>Q3UV71</accession>
<accession>E9QM13</accession>
<accession>Q8BQV5</accession>
<reference key="1">
    <citation type="journal article" date="2005" name="Science">
        <title>The transcriptional landscape of the mammalian genome.</title>
        <authorList>
            <person name="Carninci P."/>
            <person name="Kasukawa T."/>
            <person name="Katayama S."/>
            <person name="Gough J."/>
            <person name="Frith M.C."/>
            <person name="Maeda N."/>
            <person name="Oyama R."/>
            <person name="Ravasi T."/>
            <person name="Lenhard B."/>
            <person name="Wells C."/>
            <person name="Kodzius R."/>
            <person name="Shimokawa K."/>
            <person name="Bajic V.B."/>
            <person name="Brenner S.E."/>
            <person name="Batalov S."/>
            <person name="Forrest A.R."/>
            <person name="Zavolan M."/>
            <person name="Davis M.J."/>
            <person name="Wilming L.G."/>
            <person name="Aidinis V."/>
            <person name="Allen J.E."/>
            <person name="Ambesi-Impiombato A."/>
            <person name="Apweiler R."/>
            <person name="Aturaliya R.N."/>
            <person name="Bailey T.L."/>
            <person name="Bansal M."/>
            <person name="Baxter L."/>
            <person name="Beisel K.W."/>
            <person name="Bersano T."/>
            <person name="Bono H."/>
            <person name="Chalk A.M."/>
            <person name="Chiu K.P."/>
            <person name="Choudhary V."/>
            <person name="Christoffels A."/>
            <person name="Clutterbuck D.R."/>
            <person name="Crowe M.L."/>
            <person name="Dalla E."/>
            <person name="Dalrymple B.P."/>
            <person name="de Bono B."/>
            <person name="Della Gatta G."/>
            <person name="di Bernardo D."/>
            <person name="Down T."/>
            <person name="Engstrom P."/>
            <person name="Fagiolini M."/>
            <person name="Faulkner G."/>
            <person name="Fletcher C.F."/>
            <person name="Fukushima T."/>
            <person name="Furuno M."/>
            <person name="Futaki S."/>
            <person name="Gariboldi M."/>
            <person name="Georgii-Hemming P."/>
            <person name="Gingeras T.R."/>
            <person name="Gojobori T."/>
            <person name="Green R.E."/>
            <person name="Gustincich S."/>
            <person name="Harbers M."/>
            <person name="Hayashi Y."/>
            <person name="Hensch T.K."/>
            <person name="Hirokawa N."/>
            <person name="Hill D."/>
            <person name="Huminiecki L."/>
            <person name="Iacono M."/>
            <person name="Ikeo K."/>
            <person name="Iwama A."/>
            <person name="Ishikawa T."/>
            <person name="Jakt M."/>
            <person name="Kanapin A."/>
            <person name="Katoh M."/>
            <person name="Kawasawa Y."/>
            <person name="Kelso J."/>
            <person name="Kitamura H."/>
            <person name="Kitano H."/>
            <person name="Kollias G."/>
            <person name="Krishnan S.P."/>
            <person name="Kruger A."/>
            <person name="Kummerfeld S.K."/>
            <person name="Kurochkin I.V."/>
            <person name="Lareau L.F."/>
            <person name="Lazarevic D."/>
            <person name="Lipovich L."/>
            <person name="Liu J."/>
            <person name="Liuni S."/>
            <person name="McWilliam S."/>
            <person name="Madan Babu M."/>
            <person name="Madera M."/>
            <person name="Marchionni L."/>
            <person name="Matsuda H."/>
            <person name="Matsuzawa S."/>
            <person name="Miki H."/>
            <person name="Mignone F."/>
            <person name="Miyake S."/>
            <person name="Morris K."/>
            <person name="Mottagui-Tabar S."/>
            <person name="Mulder N."/>
            <person name="Nakano N."/>
            <person name="Nakauchi H."/>
            <person name="Ng P."/>
            <person name="Nilsson R."/>
            <person name="Nishiguchi S."/>
            <person name="Nishikawa S."/>
            <person name="Nori F."/>
            <person name="Ohara O."/>
            <person name="Okazaki Y."/>
            <person name="Orlando V."/>
            <person name="Pang K.C."/>
            <person name="Pavan W.J."/>
            <person name="Pavesi G."/>
            <person name="Pesole G."/>
            <person name="Petrovsky N."/>
            <person name="Piazza S."/>
            <person name="Reed J."/>
            <person name="Reid J.F."/>
            <person name="Ring B.Z."/>
            <person name="Ringwald M."/>
            <person name="Rost B."/>
            <person name="Ruan Y."/>
            <person name="Salzberg S.L."/>
            <person name="Sandelin A."/>
            <person name="Schneider C."/>
            <person name="Schoenbach C."/>
            <person name="Sekiguchi K."/>
            <person name="Semple C.A."/>
            <person name="Seno S."/>
            <person name="Sessa L."/>
            <person name="Sheng Y."/>
            <person name="Shibata Y."/>
            <person name="Shimada H."/>
            <person name="Shimada K."/>
            <person name="Silva D."/>
            <person name="Sinclair B."/>
            <person name="Sperling S."/>
            <person name="Stupka E."/>
            <person name="Sugiura K."/>
            <person name="Sultana R."/>
            <person name="Takenaka Y."/>
            <person name="Taki K."/>
            <person name="Tammoja K."/>
            <person name="Tan S.L."/>
            <person name="Tang S."/>
            <person name="Taylor M.S."/>
            <person name="Tegner J."/>
            <person name="Teichmann S.A."/>
            <person name="Ueda H.R."/>
            <person name="van Nimwegen E."/>
            <person name="Verardo R."/>
            <person name="Wei C.L."/>
            <person name="Yagi K."/>
            <person name="Yamanishi H."/>
            <person name="Zabarovsky E."/>
            <person name="Zhu S."/>
            <person name="Zimmer A."/>
            <person name="Hide W."/>
            <person name="Bult C."/>
            <person name="Grimmond S.M."/>
            <person name="Teasdale R.D."/>
            <person name="Liu E.T."/>
            <person name="Brusic V."/>
            <person name="Quackenbush J."/>
            <person name="Wahlestedt C."/>
            <person name="Mattick J.S."/>
            <person name="Hume D.A."/>
            <person name="Kai C."/>
            <person name="Sasaki D."/>
            <person name="Tomaru Y."/>
            <person name="Fukuda S."/>
            <person name="Kanamori-Katayama M."/>
            <person name="Suzuki M."/>
            <person name="Aoki J."/>
            <person name="Arakawa T."/>
            <person name="Iida J."/>
            <person name="Imamura K."/>
            <person name="Itoh M."/>
            <person name="Kato T."/>
            <person name="Kawaji H."/>
            <person name="Kawagashira N."/>
            <person name="Kawashima T."/>
            <person name="Kojima M."/>
            <person name="Kondo S."/>
            <person name="Konno H."/>
            <person name="Nakano K."/>
            <person name="Ninomiya N."/>
            <person name="Nishio T."/>
            <person name="Okada M."/>
            <person name="Plessy C."/>
            <person name="Shibata K."/>
            <person name="Shiraki T."/>
            <person name="Suzuki S."/>
            <person name="Tagami M."/>
            <person name="Waki K."/>
            <person name="Watahiki A."/>
            <person name="Okamura-Oho Y."/>
            <person name="Suzuki H."/>
            <person name="Kawai J."/>
            <person name="Hayashizaki Y."/>
        </authorList>
    </citation>
    <scope>NUCLEOTIDE SEQUENCE [LARGE SCALE MRNA] (ISOFORMS 1 AND 2)</scope>
    <source>
        <strain>C57BL/6J</strain>
        <tissue>Bone</tissue>
        <tissue>Corpora quadrigemina</tissue>
    </source>
</reference>
<reference key="2">
    <citation type="journal article" date="2009" name="PLoS Biol.">
        <title>Lineage-specific biology revealed by a finished genome assembly of the mouse.</title>
        <authorList>
            <person name="Church D.M."/>
            <person name="Goodstadt L."/>
            <person name="Hillier L.W."/>
            <person name="Zody M.C."/>
            <person name="Goldstein S."/>
            <person name="She X."/>
            <person name="Bult C.J."/>
            <person name="Agarwala R."/>
            <person name="Cherry J.L."/>
            <person name="DiCuccio M."/>
            <person name="Hlavina W."/>
            <person name="Kapustin Y."/>
            <person name="Meric P."/>
            <person name="Maglott D."/>
            <person name="Birtle Z."/>
            <person name="Marques A.C."/>
            <person name="Graves T."/>
            <person name="Zhou S."/>
            <person name="Teague B."/>
            <person name="Potamousis K."/>
            <person name="Churas C."/>
            <person name="Place M."/>
            <person name="Herschleb J."/>
            <person name="Runnheim R."/>
            <person name="Forrest D."/>
            <person name="Amos-Landgraf J."/>
            <person name="Schwartz D.C."/>
            <person name="Cheng Z."/>
            <person name="Lindblad-Toh K."/>
            <person name="Eichler E.E."/>
            <person name="Ponting C.P."/>
        </authorList>
    </citation>
    <scope>NUCLEOTIDE SEQUENCE [LARGE SCALE GENOMIC DNA]</scope>
    <source>
        <strain>C57BL/6J</strain>
    </source>
</reference>
<comment type="function">
    <text evidence="1">Transfers mannosyl residues to the hydroxyl group of serine or threonine residues. The 4 members of the TMTC family are O-mannosyl-transferases dedicated primarily to the cadherin superfamily, each member seems to have a distinct role in decorating the cadherin domains with O-linked mannose glycans at specific regions. Also acts as O-mannosyl-transferase on other proteins such as PDIA3.</text>
</comment>
<comment type="catalytic activity">
    <reaction evidence="1">
        <text>a di-trans,poly-cis-dolichyl beta-D-mannosyl phosphate + L-seryl-[protein] = 3-O-(alpha-D-mannosyl)-L-seryl-[protein] + a di-trans,poly-cis-dolichyl phosphate + H(+)</text>
        <dbReference type="Rhea" id="RHEA:17377"/>
        <dbReference type="Rhea" id="RHEA-COMP:9863"/>
        <dbReference type="Rhea" id="RHEA-COMP:13546"/>
        <dbReference type="Rhea" id="RHEA-COMP:19498"/>
        <dbReference type="Rhea" id="RHEA-COMP:19501"/>
        <dbReference type="ChEBI" id="CHEBI:15378"/>
        <dbReference type="ChEBI" id="CHEBI:29999"/>
        <dbReference type="ChEBI" id="CHEBI:57683"/>
        <dbReference type="ChEBI" id="CHEBI:58211"/>
        <dbReference type="ChEBI" id="CHEBI:137321"/>
        <dbReference type="EC" id="2.4.1.109"/>
    </reaction>
</comment>
<comment type="catalytic activity">
    <reaction evidence="1">
        <text>a di-trans,poly-cis-dolichyl beta-D-mannosyl phosphate + L-threonyl-[protein] = 3-O-(alpha-D-mannosyl)-L-threonyl-[protein] + a di-trans,poly-cis-dolichyl phosphate + H(+)</text>
        <dbReference type="Rhea" id="RHEA:53396"/>
        <dbReference type="Rhea" id="RHEA-COMP:11060"/>
        <dbReference type="Rhea" id="RHEA-COMP:13547"/>
        <dbReference type="Rhea" id="RHEA-COMP:19498"/>
        <dbReference type="Rhea" id="RHEA-COMP:19501"/>
        <dbReference type="ChEBI" id="CHEBI:15378"/>
        <dbReference type="ChEBI" id="CHEBI:30013"/>
        <dbReference type="ChEBI" id="CHEBI:57683"/>
        <dbReference type="ChEBI" id="CHEBI:58211"/>
        <dbReference type="ChEBI" id="CHEBI:137323"/>
        <dbReference type="EC" id="2.4.1.109"/>
    </reaction>
</comment>
<comment type="pathway">
    <text evidence="1">Protein modification; protein glycosylation.</text>
</comment>
<comment type="subunit">
    <text evidence="1">May interact with FAM168B.</text>
</comment>
<comment type="subcellular location">
    <subcellularLocation>
        <location evidence="6">Membrane</location>
        <topology evidence="6">Multi-pass membrane protein</topology>
    </subcellularLocation>
    <subcellularLocation>
        <location evidence="1">Endoplasmic reticulum</location>
    </subcellularLocation>
</comment>
<comment type="alternative products">
    <event type="alternative splicing"/>
    <isoform>
        <id>Q3UV71-1</id>
        <name>1</name>
        <sequence type="displayed"/>
    </isoform>
    <isoform>
        <id>Q3UV71-2</id>
        <name>2</name>
        <sequence type="described" ref="VSP_023618"/>
    </isoform>
</comment>
<comment type="similarity">
    <text evidence="6">Belongs to the TMTC family.</text>
</comment>
<comment type="sequence caution" evidence="6">
    <conflict type="frameshift">
        <sequence resource="EMBL-CDS" id="BAC32703"/>
    </conflict>
</comment>
<name>TMTC1_MOUSE</name>
<sequence length="942" mass="105811">MLVTRGDRGGGERAPSRRPRCGLVPAGAAALLAGASCLCYGRSLRGEFVHDDVWAIVNNPDVRPGTPLRWAIFANDFWGKGLADSTSHKSYRPLCVLSFRLNIFLTGMNPFYFHAVNVILHCLVTLVLMYTCDKTVFKNRGLAFVTALLFAVHPVHTEAVAGIVGRADVLACLLFLLAFLSYQRSLDQGCAGQCFPTTASPFFLLLSLFLGTCAMLVKETGITVFGVCLVYDLFSPSHKQDKLSNGAVCQHSSGQPGSPQPSSQQAHPHRESRKQRFPHKDSWGGCHSPLPPEPKSSGFPMSPRAMWSLMRCLTGSTNRNFLLTLRPFLKRAILVISYVTVILYFRLWIMGGTMPLFSEQDNPASFSPYILTRFLTYSYLLAFNVWLLLAPITLCYDWQVGSIPLVETIWDVRNLATILLAVVMALLSLHCVAAFKRLEHKEVLAGLLFLVFPFIPASNLFFRVGFVVAERVLYMPSMGYCILFVHGLSKLCAGLSRCGATSLMASTVLLLLLFSWKTVKQNEIWLSRESLFRSGVQTLPHNAKVHYNYANFLKDQGRNKEAIYHYRTALKLYPRHASALNNLGTLTKDMAEAKMYYQKALQLHPQHNRALFNLGNLLKSQEKTEEAIMLLKESIKYGPDFADAYSSLASLLAEQERFKEAEDIYQAGIKNCPDSSDLHNNYAVFLVDSGFPEKAVAHYQQAIQLSPSHHVAVVNLGRLYRSLGENSKAEEWYRRALKVARTAEVLSPLGALYYNTGRHKEALEVYREAVSLQPSQRELRLALAQVLAVMGQTKEAEKITSHIVSEEPRCLECYRLLSAIHSKQEHHGKALEAIEKALQLKPKDPKVISELFFTKGNQLREQNLLDKAFESYEAAVTLDPDQAQAWMNMGGIRHIQGSYVSARAYYERALKLVPDSKLLKENLAKLDRLERRLQEVRERDQT</sequence>
<gene>
    <name evidence="7" type="primary">Tmtc1</name>
</gene>
<organism>
    <name type="scientific">Mus musculus</name>
    <name type="common">Mouse</name>
    <dbReference type="NCBI Taxonomy" id="10090"/>
    <lineage>
        <taxon>Eukaryota</taxon>
        <taxon>Metazoa</taxon>
        <taxon>Chordata</taxon>
        <taxon>Craniata</taxon>
        <taxon>Vertebrata</taxon>
        <taxon>Euteleostomi</taxon>
        <taxon>Mammalia</taxon>
        <taxon>Eutheria</taxon>
        <taxon>Euarchontoglires</taxon>
        <taxon>Glires</taxon>
        <taxon>Rodentia</taxon>
        <taxon>Myomorpha</taxon>
        <taxon>Muroidea</taxon>
        <taxon>Muridae</taxon>
        <taxon>Murinae</taxon>
        <taxon>Mus</taxon>
        <taxon>Mus</taxon>
    </lineage>
</organism>
<dbReference type="EC" id="2.4.1.109" evidence="1"/>
<dbReference type="EMBL" id="AK046396">
    <property type="protein sequence ID" value="BAC32703.1"/>
    <property type="status" value="ALT_FRAME"/>
    <property type="molecule type" value="mRNA"/>
</dbReference>
<dbReference type="EMBL" id="AK137545">
    <property type="protein sequence ID" value="BAE23402.1"/>
    <property type="molecule type" value="mRNA"/>
</dbReference>
<dbReference type="EMBL" id="AC126683">
    <property type="status" value="NOT_ANNOTATED_CDS"/>
    <property type="molecule type" value="Genomic_DNA"/>
</dbReference>
<dbReference type="EMBL" id="AC142274">
    <property type="status" value="NOT_ANNOTATED_CDS"/>
    <property type="molecule type" value="Genomic_DNA"/>
</dbReference>
<dbReference type="CCDS" id="CCDS51960.1">
    <molecule id="Q3UV71-1"/>
</dbReference>
<dbReference type="CCDS" id="CCDS85189.1">
    <molecule id="Q3UV71-2"/>
</dbReference>
<dbReference type="RefSeq" id="NP_001334447.1">
    <molecule id="Q3UV71-2"/>
    <property type="nucleotide sequence ID" value="NM_001347518.2"/>
</dbReference>
<dbReference type="RefSeq" id="NP_945318.2">
    <molecule id="Q3UV71-1"/>
    <property type="nucleotide sequence ID" value="NM_198967.6"/>
</dbReference>
<dbReference type="SMR" id="Q3UV71"/>
<dbReference type="BioGRID" id="239881">
    <property type="interactions" value="1"/>
</dbReference>
<dbReference type="FunCoup" id="Q3UV71">
    <property type="interactions" value="527"/>
</dbReference>
<dbReference type="STRING" id="10090.ENSMUSP00000056353"/>
<dbReference type="iPTMnet" id="Q3UV71"/>
<dbReference type="PhosphoSitePlus" id="Q3UV71"/>
<dbReference type="PaxDb" id="10090-ENSMUSP00000056353"/>
<dbReference type="ProteomicsDB" id="259050">
    <molecule id="Q3UV71-1"/>
</dbReference>
<dbReference type="ProteomicsDB" id="259051">
    <molecule id="Q3UV71-2"/>
</dbReference>
<dbReference type="Antibodypedia" id="12772">
    <property type="antibodies" value="84 antibodies from 20 providers"/>
</dbReference>
<dbReference type="DNASU" id="387314"/>
<dbReference type="Ensembl" id="ENSMUST00000060095.15">
    <molecule id="Q3UV71-1"/>
    <property type="protein sequence ID" value="ENSMUSP00000056353.9"/>
    <property type="gene ID" value="ENSMUSG00000030306.15"/>
</dbReference>
<dbReference type="Ensembl" id="ENSMUST00000100772.10">
    <molecule id="Q3UV71-2"/>
    <property type="protein sequence ID" value="ENSMUSP00000098335.4"/>
    <property type="gene ID" value="ENSMUSG00000030306.15"/>
</dbReference>
<dbReference type="GeneID" id="387314"/>
<dbReference type="KEGG" id="mmu:387314"/>
<dbReference type="UCSC" id="uc009eti.2">
    <molecule id="Q3UV71-2"/>
    <property type="organism name" value="mouse"/>
</dbReference>
<dbReference type="UCSC" id="uc009etj.2">
    <molecule id="Q3UV71-1"/>
    <property type="organism name" value="mouse"/>
</dbReference>
<dbReference type="AGR" id="MGI:3039590"/>
<dbReference type="CTD" id="83857"/>
<dbReference type="MGI" id="MGI:3039590">
    <property type="gene designation" value="Tmtc1"/>
</dbReference>
<dbReference type="VEuPathDB" id="HostDB:ENSMUSG00000030306"/>
<dbReference type="eggNOG" id="KOG1124">
    <property type="taxonomic scope" value="Eukaryota"/>
</dbReference>
<dbReference type="GeneTree" id="ENSGT00940000158027"/>
<dbReference type="HOGENOM" id="CLU_011615_1_1_1"/>
<dbReference type="InParanoid" id="Q3UV71"/>
<dbReference type="OMA" id="DFEQQRH"/>
<dbReference type="OrthoDB" id="19588at2759"/>
<dbReference type="PhylomeDB" id="Q3UV71"/>
<dbReference type="TreeFam" id="TF328339"/>
<dbReference type="UniPathway" id="UPA00378"/>
<dbReference type="BioGRID-ORCS" id="387314">
    <property type="hits" value="3 hits in 78 CRISPR screens"/>
</dbReference>
<dbReference type="ChiTaRS" id="Tmtc1">
    <property type="organism name" value="mouse"/>
</dbReference>
<dbReference type="PRO" id="PR:Q3UV71"/>
<dbReference type="Proteomes" id="UP000000589">
    <property type="component" value="Chromosome 6"/>
</dbReference>
<dbReference type="RNAct" id="Q3UV71">
    <property type="molecule type" value="protein"/>
</dbReference>
<dbReference type="Bgee" id="ENSMUSG00000030306">
    <property type="expression patterns" value="Expressed in secondary oocyte and 206 other cell types or tissues"/>
</dbReference>
<dbReference type="ExpressionAtlas" id="Q3UV71">
    <property type="expression patterns" value="baseline and differential"/>
</dbReference>
<dbReference type="GO" id="GO:0005783">
    <property type="term" value="C:endoplasmic reticulum"/>
    <property type="evidence" value="ECO:0007669"/>
    <property type="project" value="UniProtKB-SubCell"/>
</dbReference>
<dbReference type="GO" id="GO:0016020">
    <property type="term" value="C:membrane"/>
    <property type="evidence" value="ECO:0007669"/>
    <property type="project" value="UniProtKB-SubCell"/>
</dbReference>
<dbReference type="GO" id="GO:0005739">
    <property type="term" value="C:mitochondrion"/>
    <property type="evidence" value="ECO:0007005"/>
    <property type="project" value="MGI"/>
</dbReference>
<dbReference type="GO" id="GO:0004169">
    <property type="term" value="F:dolichyl-phosphate-mannose-protein mannosyltransferase activity"/>
    <property type="evidence" value="ECO:0000250"/>
    <property type="project" value="UniProtKB"/>
</dbReference>
<dbReference type="GO" id="GO:0035269">
    <property type="term" value="P:protein O-linked mannosylation"/>
    <property type="evidence" value="ECO:0000250"/>
    <property type="project" value="UniProtKB"/>
</dbReference>
<dbReference type="GO" id="GO:0006396">
    <property type="term" value="P:RNA processing"/>
    <property type="evidence" value="ECO:0007669"/>
    <property type="project" value="InterPro"/>
</dbReference>
<dbReference type="FunFam" id="1.25.40.10:FF:000165">
    <property type="entry name" value="Transmembrane and tetratricopeptide repeat containing 1"/>
    <property type="match status" value="1"/>
</dbReference>
<dbReference type="FunFam" id="1.25.40.10:FF:000526">
    <property type="entry name" value="Transmembrane and tetratricopeptide repeat-containing 1"/>
    <property type="match status" value="1"/>
</dbReference>
<dbReference type="Gene3D" id="1.25.40.10">
    <property type="entry name" value="Tetratricopeptide repeat domain"/>
    <property type="match status" value="4"/>
</dbReference>
<dbReference type="InterPro" id="IPR003107">
    <property type="entry name" value="HAT"/>
</dbReference>
<dbReference type="InterPro" id="IPR013618">
    <property type="entry name" value="TMTC_DUF1736"/>
</dbReference>
<dbReference type="InterPro" id="IPR052943">
    <property type="entry name" value="TMTC_O-mannosyl-trnsfr"/>
</dbReference>
<dbReference type="InterPro" id="IPR011990">
    <property type="entry name" value="TPR-like_helical_dom_sf"/>
</dbReference>
<dbReference type="InterPro" id="IPR019734">
    <property type="entry name" value="TPR_rpt"/>
</dbReference>
<dbReference type="PANTHER" id="PTHR44809">
    <property type="match status" value="1"/>
</dbReference>
<dbReference type="PANTHER" id="PTHR44809:SF1">
    <property type="entry name" value="PROTEIN O-MANNOSYL-TRANSFERASE TMTC1"/>
    <property type="match status" value="1"/>
</dbReference>
<dbReference type="Pfam" id="PF08409">
    <property type="entry name" value="TMTC_DUF1736"/>
    <property type="match status" value="1"/>
</dbReference>
<dbReference type="Pfam" id="PF13414">
    <property type="entry name" value="TPR_11"/>
    <property type="match status" value="1"/>
</dbReference>
<dbReference type="Pfam" id="PF13424">
    <property type="entry name" value="TPR_12"/>
    <property type="match status" value="1"/>
</dbReference>
<dbReference type="Pfam" id="PF13432">
    <property type="entry name" value="TPR_16"/>
    <property type="match status" value="2"/>
</dbReference>
<dbReference type="Pfam" id="PF14559">
    <property type="entry name" value="TPR_19"/>
    <property type="match status" value="1"/>
</dbReference>
<dbReference type="SMART" id="SM00386">
    <property type="entry name" value="HAT"/>
    <property type="match status" value="4"/>
</dbReference>
<dbReference type="SMART" id="SM00028">
    <property type="entry name" value="TPR"/>
    <property type="match status" value="11"/>
</dbReference>
<dbReference type="SUPFAM" id="SSF48452">
    <property type="entry name" value="TPR-like"/>
    <property type="match status" value="2"/>
</dbReference>
<dbReference type="PROSITE" id="PS50005">
    <property type="entry name" value="TPR"/>
    <property type="match status" value="10"/>
</dbReference>
<dbReference type="PROSITE" id="PS50293">
    <property type="entry name" value="TPR_REGION"/>
    <property type="match status" value="7"/>
</dbReference>
<evidence type="ECO:0000250" key="1">
    <source>
        <dbReference type="UniProtKB" id="Q8IUR5"/>
    </source>
</evidence>
<evidence type="ECO:0000255" key="2"/>
<evidence type="ECO:0000255" key="3">
    <source>
        <dbReference type="PROSITE-ProRule" id="PRU00339"/>
    </source>
</evidence>
<evidence type="ECO:0000256" key="4">
    <source>
        <dbReference type="SAM" id="MobiDB-lite"/>
    </source>
</evidence>
<evidence type="ECO:0000303" key="5">
    <source>
    </source>
</evidence>
<evidence type="ECO:0000305" key="6"/>
<evidence type="ECO:0000312" key="7">
    <source>
        <dbReference type="MGI" id="MGI:3039590"/>
    </source>
</evidence>
<keyword id="KW-0025">Alternative splicing</keyword>
<keyword id="KW-0256">Endoplasmic reticulum</keyword>
<keyword id="KW-0472">Membrane</keyword>
<keyword id="KW-1185">Reference proteome</keyword>
<keyword id="KW-0677">Repeat</keyword>
<keyword id="KW-0802">TPR repeat</keyword>
<keyword id="KW-0808">Transferase</keyword>
<keyword id="KW-0812">Transmembrane</keyword>
<keyword id="KW-1133">Transmembrane helix</keyword>
<protein>
    <recommendedName>
        <fullName evidence="6">Protein O-mannosyl-transferase TMTC1</fullName>
        <ecNumber evidence="1">2.4.1.109</ecNumber>
    </recommendedName>
    <alternativeName>
        <fullName evidence="1">Transmembrane O-mannosyltransferase targeting cadherins 1</fullName>
    </alternativeName>
    <alternativeName>
        <fullName evidence="7">Transmembrane and tetratricopeptide repeat-containing 1</fullName>
    </alternativeName>
</protein>
<feature type="chain" id="PRO_0000280289" description="Protein O-mannosyl-transferase TMTC1">
    <location>
        <begin position="1"/>
        <end position="942"/>
    </location>
</feature>
<feature type="topological domain" description="Cytoplasmic" evidence="6">
    <location>
        <begin position="1"/>
        <end position="20"/>
    </location>
</feature>
<feature type="transmembrane region" description="Helical" evidence="2">
    <location>
        <begin position="21"/>
        <end position="41"/>
    </location>
</feature>
<feature type="topological domain" description="Extracellular" evidence="6">
    <location>
        <begin position="42"/>
        <end position="109"/>
    </location>
</feature>
<feature type="transmembrane region" description="Helical" evidence="2">
    <location>
        <begin position="110"/>
        <end position="130"/>
    </location>
</feature>
<feature type="topological domain" description="Cytoplasmic" evidence="6">
    <location>
        <begin position="131"/>
        <end position="140"/>
    </location>
</feature>
<feature type="transmembrane region" description="Helical" evidence="2">
    <location>
        <begin position="141"/>
        <end position="157"/>
    </location>
</feature>
<feature type="topological domain" description="Extracellular" evidence="6">
    <location>
        <begin position="158"/>
        <end position="159"/>
    </location>
</feature>
<feature type="transmembrane region" description="Helical" evidence="2">
    <location>
        <begin position="160"/>
        <end position="180"/>
    </location>
</feature>
<feature type="topological domain" description="Cytoplasmic" evidence="6">
    <location>
        <begin position="181"/>
        <end position="196"/>
    </location>
</feature>
<feature type="transmembrane region" description="Helical" evidence="2">
    <location>
        <begin position="197"/>
        <end position="217"/>
    </location>
</feature>
<feature type="topological domain" description="Extracellular" evidence="6">
    <location>
        <begin position="218"/>
        <end position="331"/>
    </location>
</feature>
<feature type="transmembrane region" description="Helical" evidence="2">
    <location>
        <begin position="332"/>
        <end position="352"/>
    </location>
</feature>
<feature type="topological domain" description="Cytoplasmic" evidence="6">
    <location>
        <begin position="353"/>
        <end position="373"/>
    </location>
</feature>
<feature type="transmembrane region" description="Helical" evidence="2">
    <location>
        <begin position="374"/>
        <end position="394"/>
    </location>
</feature>
<feature type="topological domain" description="Extracellular" evidence="6">
    <location>
        <begin position="395"/>
        <end position="414"/>
    </location>
</feature>
<feature type="transmembrane region" description="Helical" evidence="2">
    <location>
        <begin position="415"/>
        <end position="435"/>
    </location>
</feature>
<feature type="topological domain" description="Cytoplasmic" evidence="6">
    <location>
        <begin position="436"/>
        <end position="441"/>
    </location>
</feature>
<feature type="transmembrane region" description="Helical" evidence="2">
    <location>
        <begin position="442"/>
        <end position="462"/>
    </location>
</feature>
<feature type="topological domain" description="Extracellular" evidence="6">
    <location>
        <position position="463"/>
    </location>
</feature>
<feature type="transmembrane region" description="Helical" evidence="2">
    <location>
        <begin position="464"/>
        <end position="484"/>
    </location>
</feature>
<feature type="topological domain" description="Cytoplasmic" evidence="6">
    <location>
        <begin position="485"/>
        <end position="498"/>
    </location>
</feature>
<feature type="transmembrane region" description="Helical" evidence="2">
    <location>
        <begin position="499"/>
        <end position="519"/>
    </location>
</feature>
<feature type="topological domain" description="Extracellular" evidence="6">
    <location>
        <begin position="520"/>
        <end position="942"/>
    </location>
</feature>
<feature type="repeat" description="TPR 1" evidence="3">
    <location>
        <begin position="543"/>
        <end position="576"/>
    </location>
</feature>
<feature type="repeat" description="TPR 2" evidence="3">
    <location>
        <begin position="577"/>
        <end position="607"/>
    </location>
</feature>
<feature type="repeat" description="TPR 3" evidence="3">
    <location>
        <begin position="608"/>
        <end position="641"/>
    </location>
</feature>
<feature type="repeat" description="TPR 4" evidence="3">
    <location>
        <begin position="642"/>
        <end position="675"/>
    </location>
</feature>
<feature type="repeat" description="TPR 5" evidence="3">
    <location>
        <begin position="676"/>
        <end position="709"/>
    </location>
</feature>
<feature type="repeat" description="TPR 6" evidence="3">
    <location>
        <begin position="710"/>
        <end position="742"/>
    </location>
</feature>
<feature type="repeat" description="TPR 7" evidence="3">
    <location>
        <begin position="743"/>
        <end position="776"/>
    </location>
</feature>
<feature type="repeat" description="TPR 8" evidence="2">
    <location>
        <begin position="777"/>
        <end position="810"/>
    </location>
</feature>
<feature type="repeat" description="TPR 9" evidence="3">
    <location>
        <begin position="811"/>
        <end position="844"/>
    </location>
</feature>
<feature type="repeat" description="TPR 10" evidence="3">
    <location>
        <begin position="849"/>
        <end position="882"/>
    </location>
</feature>
<feature type="repeat" description="TPR 11" evidence="3">
    <location>
        <begin position="883"/>
        <end position="916"/>
    </location>
</feature>
<feature type="region of interest" description="Disordered" evidence="4">
    <location>
        <begin position="245"/>
        <end position="285"/>
    </location>
</feature>
<feature type="compositionally biased region" description="Low complexity" evidence="4">
    <location>
        <begin position="250"/>
        <end position="266"/>
    </location>
</feature>
<feature type="splice variant" id="VSP_023618" description="In isoform 2." evidence="5">
    <location>
        <begin position="534"/>
        <end position="571"/>
    </location>
</feature>
<feature type="sequence conflict" description="In Ref. 1; BAC32703." evidence="6" ref="1">
    <original>A</original>
    <variation>P</variation>
    <location>
        <position position="171"/>
    </location>
</feature>
<feature type="sequence conflict" description="In Ref. 1; BAE23402." evidence="6" ref="1">
    <original>P</original>
    <variation>T</variation>
    <location>
        <position position="300"/>
    </location>
</feature>